<keyword id="KW-0158">Chromosome</keyword>
<keyword id="KW-0175">Coiled coil</keyword>
<keyword id="KW-0489">Methyltransferase</keyword>
<keyword id="KW-0539">Nucleus</keyword>
<keyword id="KW-1185">Reference proteome</keyword>
<keyword id="KW-0949">S-adenosyl-L-methionine</keyword>
<keyword id="KW-0808">Transferase</keyword>
<evidence type="ECO:0000255" key="1"/>
<evidence type="ECO:0000255" key="2">
    <source>
        <dbReference type="PROSITE-ProRule" id="PRU00768"/>
    </source>
</evidence>
<evidence type="ECO:0000255" key="3">
    <source>
        <dbReference type="PROSITE-ProRule" id="PRU01012"/>
    </source>
</evidence>
<evidence type="ECO:0000256" key="4">
    <source>
        <dbReference type="SAM" id="MobiDB-lite"/>
    </source>
</evidence>
<evidence type="ECO:0000269" key="5">
    <source>
    </source>
</evidence>
<evidence type="ECO:0000303" key="6">
    <source>
    </source>
</evidence>
<evidence type="ECO:0000305" key="7"/>
<evidence type="ECO:0000312" key="8">
    <source>
        <dbReference type="FlyBase" id="FBgn0031189"/>
    </source>
</evidence>
<evidence type="ECO:0000312" key="9">
    <source>
        <dbReference type="Proteomes" id="UP000000803"/>
    </source>
</evidence>
<reference key="1">
    <citation type="journal article" date="2000" name="Science">
        <title>The genome sequence of Drosophila melanogaster.</title>
        <authorList>
            <person name="Adams M.D."/>
            <person name="Celniker S.E."/>
            <person name="Holt R.A."/>
            <person name="Evans C.A."/>
            <person name="Gocayne J.D."/>
            <person name="Amanatides P.G."/>
            <person name="Scherer S.E."/>
            <person name="Li P.W."/>
            <person name="Hoskins R.A."/>
            <person name="Galle R.F."/>
            <person name="George R.A."/>
            <person name="Lewis S.E."/>
            <person name="Richards S."/>
            <person name="Ashburner M."/>
            <person name="Henderson S.N."/>
            <person name="Sutton G.G."/>
            <person name="Wortman J.R."/>
            <person name="Yandell M.D."/>
            <person name="Zhang Q."/>
            <person name="Chen L.X."/>
            <person name="Brandon R.C."/>
            <person name="Rogers Y.-H.C."/>
            <person name="Blazej R.G."/>
            <person name="Champe M."/>
            <person name="Pfeiffer B.D."/>
            <person name="Wan K.H."/>
            <person name="Doyle C."/>
            <person name="Baxter E.G."/>
            <person name="Helt G."/>
            <person name="Nelson C.R."/>
            <person name="Miklos G.L.G."/>
            <person name="Abril J.F."/>
            <person name="Agbayani A."/>
            <person name="An H.-J."/>
            <person name="Andrews-Pfannkoch C."/>
            <person name="Baldwin D."/>
            <person name="Ballew R.M."/>
            <person name="Basu A."/>
            <person name="Baxendale J."/>
            <person name="Bayraktaroglu L."/>
            <person name="Beasley E.M."/>
            <person name="Beeson K.Y."/>
            <person name="Benos P.V."/>
            <person name="Berman B.P."/>
            <person name="Bhandari D."/>
            <person name="Bolshakov S."/>
            <person name="Borkova D."/>
            <person name="Botchan M.R."/>
            <person name="Bouck J."/>
            <person name="Brokstein P."/>
            <person name="Brottier P."/>
            <person name="Burtis K.C."/>
            <person name="Busam D.A."/>
            <person name="Butler H."/>
            <person name="Cadieu E."/>
            <person name="Center A."/>
            <person name="Chandra I."/>
            <person name="Cherry J.M."/>
            <person name="Cawley S."/>
            <person name="Dahlke C."/>
            <person name="Davenport L.B."/>
            <person name="Davies P."/>
            <person name="de Pablos B."/>
            <person name="Delcher A."/>
            <person name="Deng Z."/>
            <person name="Mays A.D."/>
            <person name="Dew I."/>
            <person name="Dietz S.M."/>
            <person name="Dodson K."/>
            <person name="Doup L.E."/>
            <person name="Downes M."/>
            <person name="Dugan-Rocha S."/>
            <person name="Dunkov B.C."/>
            <person name="Dunn P."/>
            <person name="Durbin K.J."/>
            <person name="Evangelista C.C."/>
            <person name="Ferraz C."/>
            <person name="Ferriera S."/>
            <person name="Fleischmann W."/>
            <person name="Fosler C."/>
            <person name="Gabrielian A.E."/>
            <person name="Garg N.S."/>
            <person name="Gelbart W.M."/>
            <person name="Glasser K."/>
            <person name="Glodek A."/>
            <person name="Gong F."/>
            <person name="Gorrell J.H."/>
            <person name="Gu Z."/>
            <person name="Guan P."/>
            <person name="Harris M."/>
            <person name="Harris N.L."/>
            <person name="Harvey D.A."/>
            <person name="Heiman T.J."/>
            <person name="Hernandez J.R."/>
            <person name="Houck J."/>
            <person name="Hostin D."/>
            <person name="Houston K.A."/>
            <person name="Howland T.J."/>
            <person name="Wei M.-H."/>
            <person name="Ibegwam C."/>
            <person name="Jalali M."/>
            <person name="Kalush F."/>
            <person name="Karpen G.H."/>
            <person name="Ke Z."/>
            <person name="Kennison J.A."/>
            <person name="Ketchum K.A."/>
            <person name="Kimmel B.E."/>
            <person name="Kodira C.D."/>
            <person name="Kraft C.L."/>
            <person name="Kravitz S."/>
            <person name="Kulp D."/>
            <person name="Lai Z."/>
            <person name="Lasko P."/>
            <person name="Lei Y."/>
            <person name="Levitsky A.A."/>
            <person name="Li J.H."/>
            <person name="Li Z."/>
            <person name="Liang Y."/>
            <person name="Lin X."/>
            <person name="Liu X."/>
            <person name="Mattei B."/>
            <person name="McIntosh T.C."/>
            <person name="McLeod M.P."/>
            <person name="McPherson D."/>
            <person name="Merkulov G."/>
            <person name="Milshina N.V."/>
            <person name="Mobarry C."/>
            <person name="Morris J."/>
            <person name="Moshrefi A."/>
            <person name="Mount S.M."/>
            <person name="Moy M."/>
            <person name="Murphy B."/>
            <person name="Murphy L."/>
            <person name="Muzny D.M."/>
            <person name="Nelson D.L."/>
            <person name="Nelson D.R."/>
            <person name="Nelson K.A."/>
            <person name="Nixon K."/>
            <person name="Nusskern D.R."/>
            <person name="Pacleb J.M."/>
            <person name="Palazzolo M."/>
            <person name="Pittman G.S."/>
            <person name="Pan S."/>
            <person name="Pollard J."/>
            <person name="Puri V."/>
            <person name="Reese M.G."/>
            <person name="Reinert K."/>
            <person name="Remington K."/>
            <person name="Saunders R.D.C."/>
            <person name="Scheeler F."/>
            <person name="Shen H."/>
            <person name="Shue B.C."/>
            <person name="Siden-Kiamos I."/>
            <person name="Simpson M."/>
            <person name="Skupski M.P."/>
            <person name="Smith T.J."/>
            <person name="Spier E."/>
            <person name="Spradling A.C."/>
            <person name="Stapleton M."/>
            <person name="Strong R."/>
            <person name="Sun E."/>
            <person name="Svirskas R."/>
            <person name="Tector C."/>
            <person name="Turner R."/>
            <person name="Venter E."/>
            <person name="Wang A.H."/>
            <person name="Wang X."/>
            <person name="Wang Z.-Y."/>
            <person name="Wassarman D.A."/>
            <person name="Weinstock G.M."/>
            <person name="Weissenbach J."/>
            <person name="Williams S.M."/>
            <person name="Woodage T."/>
            <person name="Worley K.C."/>
            <person name="Wu D."/>
            <person name="Yang S."/>
            <person name="Yao Q.A."/>
            <person name="Ye J."/>
            <person name="Yeh R.-F."/>
            <person name="Zaveri J.S."/>
            <person name="Zhan M."/>
            <person name="Zhang G."/>
            <person name="Zhao Q."/>
            <person name="Zheng L."/>
            <person name="Zheng X.H."/>
            <person name="Zhong F.N."/>
            <person name="Zhong W."/>
            <person name="Zhou X."/>
            <person name="Zhu S.C."/>
            <person name="Zhu X."/>
            <person name="Smith H.O."/>
            <person name="Gibbs R.A."/>
            <person name="Myers E.W."/>
            <person name="Rubin G.M."/>
            <person name="Venter J.C."/>
        </authorList>
    </citation>
    <scope>NUCLEOTIDE SEQUENCE [LARGE SCALE GENOMIC DNA]</scope>
    <source>
        <strain>Berkeley</strain>
    </source>
</reference>
<reference key="2">
    <citation type="journal article" date="2002" name="Genome Biol.">
        <title>Annotation of the Drosophila melanogaster euchromatic genome: a systematic review.</title>
        <authorList>
            <person name="Misra S."/>
            <person name="Crosby M.A."/>
            <person name="Mungall C.J."/>
            <person name="Matthews B.B."/>
            <person name="Campbell K.S."/>
            <person name="Hradecky P."/>
            <person name="Huang Y."/>
            <person name="Kaminker J.S."/>
            <person name="Millburn G.H."/>
            <person name="Prochnik S.E."/>
            <person name="Smith C.D."/>
            <person name="Tupy J.L."/>
            <person name="Whitfield E.J."/>
            <person name="Bayraktaroglu L."/>
            <person name="Berman B.P."/>
            <person name="Bettencourt B.R."/>
            <person name="Celniker S.E."/>
            <person name="de Grey A.D.N.J."/>
            <person name="Drysdale R.A."/>
            <person name="Harris N.L."/>
            <person name="Richter J."/>
            <person name="Russo S."/>
            <person name="Schroeder A.J."/>
            <person name="Shu S.Q."/>
            <person name="Stapleton M."/>
            <person name="Yamada C."/>
            <person name="Ashburner M."/>
            <person name="Gelbart W.M."/>
            <person name="Rubin G.M."/>
            <person name="Lewis S.E."/>
        </authorList>
    </citation>
    <scope>GENOME REANNOTATION</scope>
    <source>
        <strain>Berkeley</strain>
    </source>
</reference>
<reference key="3">
    <citation type="journal article" date="2002" name="Genome Biol.">
        <title>A Drosophila full-length cDNA resource.</title>
        <authorList>
            <person name="Stapleton M."/>
            <person name="Carlson J.W."/>
            <person name="Brokstein P."/>
            <person name="Yu C."/>
            <person name="Champe M."/>
            <person name="George R.A."/>
            <person name="Guarin H."/>
            <person name="Kronmiller B."/>
            <person name="Pacleb J.M."/>
            <person name="Park S."/>
            <person name="Wan K.H."/>
            <person name="Rubin G.M."/>
            <person name="Celniker S.E."/>
        </authorList>
    </citation>
    <scope>NUCLEOTIDE SEQUENCE [LARGE SCALE MRNA]</scope>
    <source>
        <strain>Berkeley</strain>
        <tissue>Head</tissue>
    </source>
</reference>
<reference key="4">
    <citation type="journal article" date="2023" name="Sci. Rep.">
        <title>dTrmt10A impacts Hsp70 chaperone m6A levels and the stress response in the Drosophila brain.</title>
        <authorList>
            <person name="Perlegos A.E."/>
            <person name="Quan X."/>
            <person name="Donnelly K.M."/>
            <person name="Shen H."/>
            <person name="Shields E.J."/>
            <person name="Elashal H."/>
            <person name="Fange Liu K."/>
            <person name="Bonini N.M."/>
        </authorList>
    </citation>
    <scope>FUNCTION</scope>
    <scope>CATALYTIC ACTIVITY</scope>
    <scope>SUBCELLULAR LOCATION</scope>
    <scope>DISRUPTION PHENOTYPE</scope>
    <scope>MUTAGENESIS OF GLY-201</scope>
</reference>
<gene>
    <name evidence="8" type="primary">Trmt10A</name>
    <name evidence="8" type="ORF">CG14618</name>
</gene>
<accession>Q9VR56</accession>
<dbReference type="EC" id="2.1.1.221" evidence="5"/>
<dbReference type="EMBL" id="AE014298">
    <property type="protein sequence ID" value="AAF50950.1"/>
    <property type="molecule type" value="Genomic_DNA"/>
</dbReference>
<dbReference type="EMBL" id="AY089688">
    <property type="protein sequence ID" value="AAL90426.1"/>
    <property type="molecule type" value="mRNA"/>
</dbReference>
<dbReference type="RefSeq" id="NP_608464.1">
    <property type="nucleotide sequence ID" value="NM_134620.4"/>
</dbReference>
<dbReference type="SMR" id="Q9VR56"/>
<dbReference type="FunCoup" id="Q9VR56">
    <property type="interactions" value="1914"/>
</dbReference>
<dbReference type="IntAct" id="Q9VR56">
    <property type="interactions" value="1"/>
</dbReference>
<dbReference type="STRING" id="7227.FBpp0077043"/>
<dbReference type="GlyGen" id="Q9VR56">
    <property type="glycosylation" value="1 site"/>
</dbReference>
<dbReference type="PaxDb" id="7227-FBpp0077043"/>
<dbReference type="DNASU" id="33134"/>
<dbReference type="EnsemblMetazoa" id="FBtr0077351">
    <property type="protein sequence ID" value="FBpp0077043"/>
    <property type="gene ID" value="FBgn0031189"/>
</dbReference>
<dbReference type="GeneID" id="33134"/>
<dbReference type="KEGG" id="dme:Dmel_CG14618"/>
<dbReference type="UCSC" id="CG14618-RA">
    <property type="organism name" value="d. melanogaster"/>
</dbReference>
<dbReference type="AGR" id="FB:FBgn0031189"/>
<dbReference type="FlyBase" id="FBgn0031189">
    <property type="gene designation" value="Trmt10A"/>
</dbReference>
<dbReference type="VEuPathDB" id="VectorBase:FBgn0031189"/>
<dbReference type="eggNOG" id="KOG2967">
    <property type="taxonomic scope" value="Eukaryota"/>
</dbReference>
<dbReference type="GeneTree" id="ENSGT00530000063169"/>
<dbReference type="HOGENOM" id="CLU_034384_7_0_1"/>
<dbReference type="InParanoid" id="Q9VR56"/>
<dbReference type="OMA" id="FKKNDGW"/>
<dbReference type="OrthoDB" id="278300at2759"/>
<dbReference type="PhylomeDB" id="Q9VR56"/>
<dbReference type="BioGRID-ORCS" id="33134">
    <property type="hits" value="0 hits in 1 CRISPR screen"/>
</dbReference>
<dbReference type="GenomeRNAi" id="33134"/>
<dbReference type="PRO" id="PR:Q9VR56"/>
<dbReference type="Proteomes" id="UP000000803">
    <property type="component" value="Chromosome X"/>
</dbReference>
<dbReference type="Bgee" id="FBgn0031189">
    <property type="expression patterns" value="Expressed in escort cell (Drosophila) in ovary and 33 other cell types or tissues"/>
</dbReference>
<dbReference type="GO" id="GO:0000785">
    <property type="term" value="C:chromatin"/>
    <property type="evidence" value="ECO:0000314"/>
    <property type="project" value="FlyBase"/>
</dbReference>
<dbReference type="GO" id="GO:0005730">
    <property type="term" value="C:nucleolus"/>
    <property type="evidence" value="ECO:0000314"/>
    <property type="project" value="FlyBase"/>
</dbReference>
<dbReference type="GO" id="GO:0005654">
    <property type="term" value="C:nucleoplasm"/>
    <property type="evidence" value="ECO:0000318"/>
    <property type="project" value="GO_Central"/>
</dbReference>
<dbReference type="GO" id="GO:0005634">
    <property type="term" value="C:nucleus"/>
    <property type="evidence" value="ECO:0000318"/>
    <property type="project" value="GO_Central"/>
</dbReference>
<dbReference type="GO" id="GO:0052905">
    <property type="term" value="F:tRNA (guanosine(9)-N1)-methyltransferase activity"/>
    <property type="evidence" value="ECO:0000315"/>
    <property type="project" value="FlyBase"/>
</dbReference>
<dbReference type="GO" id="GO:0000049">
    <property type="term" value="F:tRNA binding"/>
    <property type="evidence" value="ECO:0000318"/>
    <property type="project" value="GO_Central"/>
</dbReference>
<dbReference type="GO" id="GO:0034605">
    <property type="term" value="P:cellular response to heat"/>
    <property type="evidence" value="ECO:0000270"/>
    <property type="project" value="FlyBase"/>
</dbReference>
<dbReference type="GO" id="GO:1905870">
    <property type="term" value="P:positive regulation of 3'-UTR-mediated mRNA stabilization"/>
    <property type="evidence" value="ECO:0000316"/>
    <property type="project" value="FlyBase"/>
</dbReference>
<dbReference type="GO" id="GO:0002939">
    <property type="term" value="P:tRNA N1-guanine methylation"/>
    <property type="evidence" value="ECO:0000315"/>
    <property type="project" value="FlyBase"/>
</dbReference>
<dbReference type="FunFam" id="3.40.1280.30:FF:000001">
    <property type="entry name" value="tRNA methyltransferase 10 homolog A"/>
    <property type="match status" value="1"/>
</dbReference>
<dbReference type="Gene3D" id="3.40.1280.30">
    <property type="match status" value="1"/>
</dbReference>
<dbReference type="InterPro" id="IPR028564">
    <property type="entry name" value="MT_TRM10-typ"/>
</dbReference>
<dbReference type="InterPro" id="IPR038459">
    <property type="entry name" value="MT_TRM10-typ_sf"/>
</dbReference>
<dbReference type="InterPro" id="IPR016653">
    <property type="entry name" value="TRM10/TRM10A"/>
</dbReference>
<dbReference type="InterPro" id="IPR007356">
    <property type="entry name" value="tRNA_m1G_MeTrfase_euk"/>
</dbReference>
<dbReference type="InterPro" id="IPR016009">
    <property type="entry name" value="tRNA_MeTrfase_TRMD/TRM10"/>
</dbReference>
<dbReference type="PANTHER" id="PTHR13563">
    <property type="entry name" value="TRNA (GUANINE-9-) METHYLTRANSFERASE"/>
    <property type="match status" value="1"/>
</dbReference>
<dbReference type="PANTHER" id="PTHR13563:SF13">
    <property type="entry name" value="TRNA METHYLTRANSFERASE 10 HOMOLOG A"/>
    <property type="match status" value="1"/>
</dbReference>
<dbReference type="Pfam" id="PF01746">
    <property type="entry name" value="tRNA_m1G_MT"/>
    <property type="match status" value="1"/>
</dbReference>
<dbReference type="PIRSF" id="PIRSF016323">
    <property type="entry name" value="tRNA_m1G_mtfrase_met"/>
    <property type="match status" value="1"/>
</dbReference>
<dbReference type="PROSITE" id="PS51675">
    <property type="entry name" value="SAM_MT_TRM10"/>
    <property type="match status" value="1"/>
</dbReference>
<proteinExistence type="evidence at protein level"/>
<feature type="chain" id="PRO_0000311319" description="tRNA (guanine(9)-N(1))-methyltransferase Trmt10A">
    <location>
        <begin position="1"/>
        <end position="319"/>
    </location>
</feature>
<feature type="domain" description="SAM-dependent MTase TRM10-type" evidence="3">
    <location>
        <begin position="83"/>
        <end position="274"/>
    </location>
</feature>
<feature type="region of interest" description="Disordered" evidence="4">
    <location>
        <begin position="16"/>
        <end position="87"/>
    </location>
</feature>
<feature type="region of interest" description="Disordered" evidence="4">
    <location>
        <begin position="275"/>
        <end position="319"/>
    </location>
</feature>
<feature type="coiled-coil region" evidence="1">
    <location>
        <begin position="44"/>
        <end position="67"/>
    </location>
</feature>
<feature type="short sequence motif" description="Nuclear localization signal" evidence="2">
    <location>
        <begin position="35"/>
        <end position="42"/>
    </location>
</feature>
<feature type="compositionally biased region" description="Polar residues" evidence="4">
    <location>
        <begin position="17"/>
        <end position="33"/>
    </location>
</feature>
<feature type="compositionally biased region" description="Basic and acidic residues" evidence="4">
    <location>
        <begin position="40"/>
        <end position="58"/>
    </location>
</feature>
<feature type="compositionally biased region" description="Basic and acidic residues" evidence="4">
    <location>
        <begin position="78"/>
        <end position="87"/>
    </location>
</feature>
<feature type="compositionally biased region" description="Basic and acidic residues" evidence="4">
    <location>
        <begin position="276"/>
        <end position="302"/>
    </location>
</feature>
<feature type="mutagenesis site" description="Abrogates methyltransferase activity but does not affect the protein's influence on Hsp70 chaperone protein expression levels or on organismal stress resilience." evidence="5">
    <original>G</original>
    <variation>R</variation>
    <location>
        <position position="201"/>
    </location>
</feature>
<organism evidence="9">
    <name type="scientific">Drosophila melanogaster</name>
    <name type="common">Fruit fly</name>
    <dbReference type="NCBI Taxonomy" id="7227"/>
    <lineage>
        <taxon>Eukaryota</taxon>
        <taxon>Metazoa</taxon>
        <taxon>Ecdysozoa</taxon>
        <taxon>Arthropoda</taxon>
        <taxon>Hexapoda</taxon>
        <taxon>Insecta</taxon>
        <taxon>Pterygota</taxon>
        <taxon>Neoptera</taxon>
        <taxon>Endopterygota</taxon>
        <taxon>Diptera</taxon>
        <taxon>Brachycera</taxon>
        <taxon>Muscomorpha</taxon>
        <taxon>Ephydroidea</taxon>
        <taxon>Drosophilidae</taxon>
        <taxon>Drosophila</taxon>
        <taxon>Sophophora</taxon>
    </lineage>
</organism>
<comment type="function">
    <text evidence="5">S-adenosyl-L-methionine-dependent guanine N(1)-methyltransferase that catalyzes the formation of N(1)-methylguanine at position 9 (m1G9) in tRNAs (PubMed:38155219). Modulates Mettl3-mediated N6-methyladenosine (m6A) methylation of mRNA 5'-UTRs and 3'-UTRs independent of its methyltransferase activity; influences mRNA stability and protein levels, in particular of Hsp70 chaperone proteins and other stress response proteins (PubMed:38155219). Also regulates stability of transcripts encoding proteins involved in signaling processes and proteins involved in neurogenesis and axon guidance pathways (PubMed:38155219).</text>
</comment>
<comment type="catalytic activity">
    <reaction evidence="5">
        <text>guanosine(9) in tRNA + S-adenosyl-L-methionine = N(1)-methylguanosine(9) in tRNA + S-adenosyl-L-homocysteine + H(+)</text>
        <dbReference type="Rhea" id="RHEA:43156"/>
        <dbReference type="Rhea" id="RHEA-COMP:10367"/>
        <dbReference type="Rhea" id="RHEA-COMP:10368"/>
        <dbReference type="ChEBI" id="CHEBI:15378"/>
        <dbReference type="ChEBI" id="CHEBI:57856"/>
        <dbReference type="ChEBI" id="CHEBI:59789"/>
        <dbReference type="ChEBI" id="CHEBI:73542"/>
        <dbReference type="ChEBI" id="CHEBI:74269"/>
        <dbReference type="EC" id="2.1.1.221"/>
    </reaction>
</comment>
<comment type="subcellular location">
    <subcellularLocation>
        <location evidence="5">Nucleus</location>
    </subcellularLocation>
    <subcellularLocation>
        <location evidence="5">Nucleus</location>
        <location evidence="5">Nucleolus</location>
    </subcellularLocation>
    <subcellularLocation>
        <location evidence="5">Chromosome</location>
    </subcellularLocation>
    <text evidence="5">Chromatin association is not dependent on RNA.</text>
</comment>
<comment type="disruption phenotype">
    <text evidence="5">RNAi-mediated knockdown is viable and adult brains show reduced levels of m1G9 tRNA modification and enrichment of m6A modification on mRNA transcripts, in particular those encoding Hsp70 chaperone proteins.</text>
</comment>
<comment type="similarity">
    <text evidence="3">Belongs to the class IV-like SAM-binding methyltransferase superfamily. TRM10 family.</text>
</comment>
<sequence length="319" mass="36442">MDTTEKALKEVTPAMLSLNNCPGTTPGTPMSKNQLKKQRKLAEFAELRKLRREREREKKKQKRREAKELGLPVRTGPSRKELKKRQLADGGKSGLSVAIDLDYDDLMQERDIVKCVKQCLRIYTINRRSPQPGNLHFTGIRRNGHIHESFKKNEGWENWHVQYYFDRGHTDIFEHSQLVYLTCESDRVLDKLQPGCTYVIGGLVDHNHFKGLCHSRATSAGLTTARLPLSEHVDMKTRAVLSTYHVFELLTKVAAGQDWTTAILETIPMRKGAKAKITDKKEPNHCLEQQDEKQKQEAESDKPTLTAVESEIESHSLDS</sequence>
<name>TM10A_DROME</name>
<protein>
    <recommendedName>
        <fullName evidence="7">tRNA (guanine(9)-N(1))-methyltransferase Trmt10A</fullName>
        <ecNumber evidence="5">2.1.1.221</ecNumber>
    </recommendedName>
    <alternativeName>
        <fullName>RNA (guanine-9-)-methyltransferase domain-containing protein 2 homolog</fullName>
    </alternativeName>
    <alternativeName>
        <fullName evidence="6 8">tRNA methyltransferase 10A</fullName>
        <shortName evidence="6">dTrmt10A</shortName>
    </alternativeName>
</protein>